<proteinExistence type="evidence at protein level"/>
<comment type="function">
    <text evidence="1 2 4 5">Apoptosis regulator that functions through different apoptotic signaling pathways (PubMed:9356461, PubMed:9804769). Plays a roles as pro-apoptotic protein that positively regulates intrinsic apoptotic process in a BAX- and BAK1-dependent manner or in a BAX- and BAK1-independent manner (By similarity). In response to endoplasmic reticulum stress promotes mitochondrial apoptosis through downstream BAX/BAK1 activation and positive regulation of PERK-mediated unfolded protein response (By similarity). Activates apoptosis independently of heterodimerization with survival-promoting BCL2 and BCL2L1 through induction of mitochondrial outer membrane permeabilization, in a BAX- and BAK1-independent manner, in response to inhibition of ERAD-proteasome degradation system, resulting in cytochrome c release (By similarity). In response to DNA damage, mediates intrinsic apoptotic process in a TP53-dependent manner. Plays a role in granulosa cell apoptosis by CASP3 activation (By similarity). Plays a roles as anti-apoptotic protein during neuronal apoptotic process, by negatively regulating poly ADP-ribose polymerase-dependent cell death through regulation of neuronal calcium homeostasis and mitochondrial bioenergetics in response to NMDA excitation (By similarity). In addition to its role in apoptosis, may regulate trophoblast cell proliferation during the early stages of placental development, by acting on G1/S transition through regulation of CCNE1 expression. May also play a role as an inducer of autophagy by disrupting interaction between MCL1 and BECN1 (By similarity).</text>
</comment>
<comment type="function">
    <molecule>Isoform 2</molecule>
    <text evidence="5">Positively regulates apoptotic process in an heterodimerization-independent manner with antiapoptotic Bcl-2 proteins.</text>
</comment>
<comment type="subunit">
    <text evidence="1 2 5">Isoform 1: Honomer; positively regulates apoptotic process. Homodimer (By similarity). Heterodimer (PubMed:9804769). Oligomer; promoted by apoptotic stimuli and BH3-only proteins; mediates constitutive activation. Interacts (via BH4 domain) with ITPR1; enhances BOK expression and stabilization; limits apoptosis and prevents ubiquitination and then degradation; protects ITPR1 from proteolysis by CASP3 during apoptosis. Interacts with ITPR2 and ITPR3; binds most strongly to ITPR2, and barely to ITPR3; regulates their expression (By similarity). Interacts with XPO1; translocates to the cytoplasm. Interacts with BNIP3; promotes oligomerization (By similarity). Isoform 2: Does not heterodimerize with antiapoptotic Bcl-2 proteins (PubMed:9804769).</text>
</comment>
<comment type="subcellular location">
    <subcellularLocation>
        <location evidence="1">Mitochondrion membrane</location>
        <topology evidence="1">Single-pass membrane protein</topology>
    </subcellularLocation>
    <subcellularLocation>
        <location evidence="2">Endoplasmic reticulum membrane</location>
        <topology evidence="1">Single-pass membrane protein</topology>
    </subcellularLocation>
    <subcellularLocation>
        <location evidence="2">Mitochondrion inner membrane</location>
    </subcellularLocation>
    <subcellularLocation>
        <location evidence="2">Cytoplasm</location>
    </subcellularLocation>
    <subcellularLocation>
        <location evidence="2">Nucleus</location>
    </subcellularLocation>
    <subcellularLocation>
        <location evidence="2">Mitochondrion</location>
    </subcellularLocation>
    <subcellularLocation>
        <location evidence="2">Endoplasmic reticulum</location>
    </subcellularLocation>
    <subcellularLocation>
        <location evidence="2">Mitochondrion outer membrane</location>
    </subcellularLocation>
    <subcellularLocation>
        <location evidence="1">Early endosome membrane</location>
    </subcellularLocation>
    <subcellularLocation>
        <location evidence="1">Recycling endosome membrane</location>
    </subcellularLocation>
    <subcellularLocation>
        <location evidence="1">Nucleus outer membrane</location>
    </subcellularLocation>
    <subcellularLocation>
        <location evidence="1">Golgi apparatus</location>
        <location evidence="1">cis-Golgi network membrane</location>
    </subcellularLocation>
    <subcellularLocation>
        <location evidence="1">Golgi apparatus</location>
        <location evidence="1">trans-Golgi network membrane</location>
    </subcellularLocation>
    <subcellularLocation>
        <location evidence="2">Membrane</location>
    </subcellularLocation>
    <text evidence="1 2">Nuclear and cytoplasmic compartments in the early stages of apoptosis and during apoptosis it associates with mitochondria. In healthy cells, associates loosely with the membrane in a hit-and-run mode. The insertion and accumulation on membranes is enhanced through the activity of death signals, resulting in the integration of the membrane-bound protein into the membrane (By similarity). The transmembrane domain controls subcellular localization; constitutes a tail-anchor. Localizes in early and late endosome upon blocking of apoptosis. Must localize to the mitochondria to induce mitochondrial outer membrane permeabilization and apoptosis (By similarity).</text>
</comment>
<comment type="alternative products">
    <event type="alternative splicing"/>
    <isoform>
        <id>Q792S6-1</id>
        <name>1</name>
        <name evidence="7">Bok-L</name>
        <sequence type="displayed"/>
    </isoform>
    <isoform>
        <id>Q792S6-2</id>
        <name>2</name>
        <name evidence="7">Bok-S</name>
        <sequence type="described" ref="VSP_012447"/>
    </isoform>
</comment>
<comment type="tissue specificity">
    <text evidence="4">Expressed in ovary, testis and uterus.</text>
</comment>
<comment type="domain">
    <text evidence="1">BH4 domain mediates interaction with ITPR1.</text>
</comment>
<comment type="PTM">
    <text evidence="1">Ubiquitinated by AMFR/gp78 E3 ubiquitin ligase complex; mediates degradation by ubiquitin-proteasome pathway in a VCP/p97-dependent manner; prevents from proapoptotic activity; promotes degradation of newly synthesized proteins that are not ITPR1 associated.</text>
</comment>
<comment type="similarity">
    <text evidence="8">Belongs to the Bcl-2 family.</text>
</comment>
<protein>
    <recommendedName>
        <fullName evidence="6">Bcl-2-related ovarian killer protein</fullName>
    </recommendedName>
</protein>
<accession>Q792S6</accession>
<accession>O88857</accession>
<evidence type="ECO:0000250" key="1">
    <source>
        <dbReference type="UniProtKB" id="O35425"/>
    </source>
</evidence>
<evidence type="ECO:0000250" key="2">
    <source>
        <dbReference type="UniProtKB" id="Q9UMX3"/>
    </source>
</evidence>
<evidence type="ECO:0000255" key="3"/>
<evidence type="ECO:0000269" key="4">
    <source>
    </source>
</evidence>
<evidence type="ECO:0000269" key="5">
    <source>
    </source>
</evidence>
<evidence type="ECO:0000303" key="6">
    <source>
    </source>
</evidence>
<evidence type="ECO:0000303" key="7">
    <source>
    </source>
</evidence>
<evidence type="ECO:0000305" key="8"/>
<evidence type="ECO:0000312" key="9">
    <source>
        <dbReference type="RGD" id="70984"/>
    </source>
</evidence>
<gene>
    <name evidence="9" type="primary">Bok</name>
</gene>
<reference key="1">
    <citation type="journal article" date="1997" name="Proc. Natl. Acad. Sci. U.S.A.">
        <title>Bok is a pro-apoptotic Bcl-2 protein with restricted expression in reproductive tissues and heterodimerizes with selective anti-apoptotic Bcl-2 family members.</title>
        <authorList>
            <person name="Hsu S.Y."/>
            <person name="Kaipia A."/>
            <person name="McGee E."/>
            <person name="Lomeli M."/>
            <person name="Hsueh A.J.W."/>
        </authorList>
    </citation>
    <scope>NUCLEOTIDE SEQUENCE [MRNA] (ISOFORMS 1 AND 2)</scope>
    <scope>TISSUE SPECIFICITY</scope>
    <scope>FUNCTION</scope>
    <source>
        <strain>Sprague-Dawley</strain>
        <tissue>Ovary</tissue>
    </source>
</reference>
<reference key="2">
    <citation type="journal article" date="1998" name="J. Biol. Chem.">
        <title>A splicing variant of the Bcl-2 member Bok with a truncated BH3 domain induces apoptosis but does not dimerize with antiapoptotic Bcl-2 proteins in vitro.</title>
        <authorList>
            <person name="Hsu S.Y."/>
            <person name="Hsueh A.J."/>
        </authorList>
    </citation>
    <scope>NUCLEOTIDE SEQUENCE [MRNA] (ISOFORMS 1 AND 2)</scope>
    <scope>FUNCTION</scope>
    <scope>PROTEIN HETERODIMERIZATION</scope>
    <scope>SUBUNIT</scope>
    <scope>MUTAGENESIS OF 71-LEU--LEU-74; 75-GLY--GLU-77 AND GLY-75</scope>
</reference>
<reference key="3">
    <citation type="journal article" date="2004" name="Genome Res.">
        <title>The status, quality, and expansion of the NIH full-length cDNA project: the Mammalian Gene Collection (MGC).</title>
        <authorList>
            <consortium name="The MGC Project Team"/>
        </authorList>
    </citation>
    <scope>NUCLEOTIDE SEQUENCE [LARGE SCALE MRNA] (ISOFORM 1)</scope>
    <source>
        <tissue>Testis</tissue>
    </source>
</reference>
<organism>
    <name type="scientific">Rattus norvegicus</name>
    <name type="common">Rat</name>
    <dbReference type="NCBI Taxonomy" id="10116"/>
    <lineage>
        <taxon>Eukaryota</taxon>
        <taxon>Metazoa</taxon>
        <taxon>Chordata</taxon>
        <taxon>Craniata</taxon>
        <taxon>Vertebrata</taxon>
        <taxon>Euteleostomi</taxon>
        <taxon>Mammalia</taxon>
        <taxon>Eutheria</taxon>
        <taxon>Euarchontoglires</taxon>
        <taxon>Glires</taxon>
        <taxon>Rodentia</taxon>
        <taxon>Myomorpha</taxon>
        <taxon>Muroidea</taxon>
        <taxon>Muridae</taxon>
        <taxon>Murinae</taxon>
        <taxon>Rattus</taxon>
    </lineage>
</organism>
<keyword id="KW-0025">Alternative splicing</keyword>
<keyword id="KW-0053">Apoptosis</keyword>
<keyword id="KW-0963">Cytoplasm</keyword>
<keyword id="KW-0256">Endoplasmic reticulum</keyword>
<keyword id="KW-0967">Endosome</keyword>
<keyword id="KW-0333">Golgi apparatus</keyword>
<keyword id="KW-1017">Isopeptide bond</keyword>
<keyword id="KW-0472">Membrane</keyword>
<keyword id="KW-0496">Mitochondrion</keyword>
<keyword id="KW-0999">Mitochondrion inner membrane</keyword>
<keyword id="KW-1000">Mitochondrion outer membrane</keyword>
<keyword id="KW-0539">Nucleus</keyword>
<keyword id="KW-0597">Phosphoprotein</keyword>
<keyword id="KW-1185">Reference proteome</keyword>
<keyword id="KW-0812">Transmembrane</keyword>
<keyword id="KW-1133">Transmembrane helix</keyword>
<keyword id="KW-0832">Ubl conjugation</keyword>
<name>BOK_RAT</name>
<dbReference type="EMBL" id="AF027954">
    <property type="protein sequence ID" value="AAB87418.1"/>
    <property type="molecule type" value="mRNA"/>
</dbReference>
<dbReference type="EMBL" id="AF051093">
    <property type="protein sequence ID" value="AAC61928.1"/>
    <property type="molecule type" value="mRNA"/>
</dbReference>
<dbReference type="EMBL" id="BC078871">
    <property type="protein sequence ID" value="AAH78871.1"/>
    <property type="molecule type" value="mRNA"/>
</dbReference>
<dbReference type="RefSeq" id="NP_059008.1">
    <molecule id="Q792S6-1"/>
    <property type="nucleotide sequence ID" value="NM_017312.2"/>
</dbReference>
<dbReference type="RefSeq" id="XP_017451805.1">
    <property type="nucleotide sequence ID" value="XM_017596316.1"/>
</dbReference>
<dbReference type="RefSeq" id="XP_038939058.1">
    <molecule id="Q792S6-2"/>
    <property type="nucleotide sequence ID" value="XM_039083130.2"/>
</dbReference>
<dbReference type="SMR" id="Q792S6"/>
<dbReference type="FunCoup" id="Q792S6">
    <property type="interactions" value="95"/>
</dbReference>
<dbReference type="STRING" id="10116.ENSRNOP00000024693"/>
<dbReference type="PhosphoSitePlus" id="Q792S6"/>
<dbReference type="PaxDb" id="10116-ENSRNOP00000024693"/>
<dbReference type="Ensembl" id="ENSRNOT00000024526.5">
    <molecule id="Q792S6-2"/>
    <property type="protein sequence ID" value="ENSRNOP00000024526.2"/>
    <property type="gene ID" value="ENSRNOG00000018214.7"/>
</dbReference>
<dbReference type="Ensembl" id="ENSRNOT00000024695.7">
    <molecule id="Q792S6-1"/>
    <property type="protein sequence ID" value="ENSRNOP00000024693.3"/>
    <property type="gene ID" value="ENSRNOG00000018214.7"/>
</dbReference>
<dbReference type="GeneID" id="29884"/>
<dbReference type="KEGG" id="rno:29884"/>
<dbReference type="UCSC" id="RGD:70984">
    <molecule id="Q792S6-1"/>
    <property type="organism name" value="rat"/>
</dbReference>
<dbReference type="AGR" id="RGD:70984"/>
<dbReference type="CTD" id="666"/>
<dbReference type="RGD" id="70984">
    <property type="gene designation" value="Bok"/>
</dbReference>
<dbReference type="eggNOG" id="KOG4728">
    <property type="taxonomic scope" value="Eukaryota"/>
</dbReference>
<dbReference type="GeneTree" id="ENSGT01130000278292"/>
<dbReference type="HOGENOM" id="CLU_114994_0_0_1"/>
<dbReference type="InParanoid" id="Q792S6"/>
<dbReference type="OMA" id="DMTKCVV"/>
<dbReference type="OrthoDB" id="5947850at2759"/>
<dbReference type="PhylomeDB" id="Q792S6"/>
<dbReference type="TreeFam" id="TF315834"/>
<dbReference type="PRO" id="PR:Q792S6"/>
<dbReference type="Proteomes" id="UP000002494">
    <property type="component" value="Chromosome 9"/>
</dbReference>
<dbReference type="Bgee" id="ENSRNOG00000018214">
    <property type="expression patterns" value="Expressed in ovary and 19 other cell types or tissues"/>
</dbReference>
<dbReference type="GO" id="GO:0033106">
    <property type="term" value="C:cis-Golgi network membrane"/>
    <property type="evidence" value="ECO:0000250"/>
    <property type="project" value="UniProtKB"/>
</dbReference>
<dbReference type="GO" id="GO:0005737">
    <property type="term" value="C:cytoplasm"/>
    <property type="evidence" value="ECO:0000266"/>
    <property type="project" value="RGD"/>
</dbReference>
<dbReference type="GO" id="GO:0031901">
    <property type="term" value="C:early endosome membrane"/>
    <property type="evidence" value="ECO:0000250"/>
    <property type="project" value="UniProtKB"/>
</dbReference>
<dbReference type="GO" id="GO:0005783">
    <property type="term" value="C:endoplasmic reticulum"/>
    <property type="evidence" value="ECO:0000250"/>
    <property type="project" value="UniProtKB"/>
</dbReference>
<dbReference type="GO" id="GO:0005789">
    <property type="term" value="C:endoplasmic reticulum membrane"/>
    <property type="evidence" value="ECO:0000250"/>
    <property type="project" value="UniProtKB"/>
</dbReference>
<dbReference type="GO" id="GO:0005794">
    <property type="term" value="C:Golgi apparatus"/>
    <property type="evidence" value="ECO:0000266"/>
    <property type="project" value="RGD"/>
</dbReference>
<dbReference type="GO" id="GO:0016020">
    <property type="term" value="C:membrane"/>
    <property type="evidence" value="ECO:0000250"/>
    <property type="project" value="UniProtKB"/>
</dbReference>
<dbReference type="GO" id="GO:0005743">
    <property type="term" value="C:mitochondrial inner membrane"/>
    <property type="evidence" value="ECO:0000266"/>
    <property type="project" value="RGD"/>
</dbReference>
<dbReference type="GO" id="GO:0031966">
    <property type="term" value="C:mitochondrial membrane"/>
    <property type="evidence" value="ECO:0000250"/>
    <property type="project" value="UniProtKB"/>
</dbReference>
<dbReference type="GO" id="GO:0005741">
    <property type="term" value="C:mitochondrial outer membrane"/>
    <property type="evidence" value="ECO:0000318"/>
    <property type="project" value="GO_Central"/>
</dbReference>
<dbReference type="GO" id="GO:0005739">
    <property type="term" value="C:mitochondrion"/>
    <property type="evidence" value="ECO:0000266"/>
    <property type="project" value="RGD"/>
</dbReference>
<dbReference type="GO" id="GO:0005640">
    <property type="term" value="C:nuclear outer membrane"/>
    <property type="evidence" value="ECO:0007669"/>
    <property type="project" value="UniProtKB-SubCell"/>
</dbReference>
<dbReference type="GO" id="GO:0005634">
    <property type="term" value="C:nucleus"/>
    <property type="evidence" value="ECO:0000250"/>
    <property type="project" value="UniProtKB"/>
</dbReference>
<dbReference type="GO" id="GO:0055038">
    <property type="term" value="C:recycling endosome membrane"/>
    <property type="evidence" value="ECO:0000250"/>
    <property type="project" value="UniProtKB"/>
</dbReference>
<dbReference type="GO" id="GO:0032588">
    <property type="term" value="C:trans-Golgi network membrane"/>
    <property type="evidence" value="ECO:0000250"/>
    <property type="project" value="UniProtKB"/>
</dbReference>
<dbReference type="GO" id="GO:0051400">
    <property type="term" value="F:BH domain binding"/>
    <property type="evidence" value="ECO:0000353"/>
    <property type="project" value="RGD"/>
</dbReference>
<dbReference type="GO" id="GO:0015267">
    <property type="term" value="F:channel activity"/>
    <property type="evidence" value="ECO:0000318"/>
    <property type="project" value="GO_Central"/>
</dbReference>
<dbReference type="GO" id="GO:0046983">
    <property type="term" value="F:protein dimerization activity"/>
    <property type="evidence" value="ECO:0000353"/>
    <property type="project" value="UniProtKB"/>
</dbReference>
<dbReference type="GO" id="GO:0046982">
    <property type="term" value="F:protein heterodimerization activity"/>
    <property type="evidence" value="ECO:0000314"/>
    <property type="project" value="UniProtKB"/>
</dbReference>
<dbReference type="GO" id="GO:0042803">
    <property type="term" value="F:protein homodimerization activity"/>
    <property type="evidence" value="ECO:0000250"/>
    <property type="project" value="UniProtKB"/>
</dbReference>
<dbReference type="GO" id="GO:0044877">
    <property type="term" value="F:protein-containing complex binding"/>
    <property type="evidence" value="ECO:0000353"/>
    <property type="project" value="RGD"/>
</dbReference>
<dbReference type="GO" id="GO:0005102">
    <property type="term" value="F:signaling receptor binding"/>
    <property type="evidence" value="ECO:0000266"/>
    <property type="project" value="RGD"/>
</dbReference>
<dbReference type="GO" id="GO:0031625">
    <property type="term" value="F:ubiquitin protein ligase binding"/>
    <property type="evidence" value="ECO:0000266"/>
    <property type="project" value="RGD"/>
</dbReference>
<dbReference type="GO" id="GO:0006915">
    <property type="term" value="P:apoptotic process"/>
    <property type="evidence" value="ECO:0000314"/>
    <property type="project" value="UniProtKB"/>
</dbReference>
<dbReference type="GO" id="GO:0006921">
    <property type="term" value="P:cellular component disassembly involved in execution phase of apoptosis"/>
    <property type="evidence" value="ECO:0000250"/>
    <property type="project" value="UniProtKB"/>
</dbReference>
<dbReference type="GO" id="GO:0097192">
    <property type="term" value="P:extrinsic apoptotic signaling pathway in absence of ligand"/>
    <property type="evidence" value="ECO:0000318"/>
    <property type="project" value="GO_Central"/>
</dbReference>
<dbReference type="GO" id="GO:0072332">
    <property type="term" value="P:intrinsic apoptotic signaling pathway by p53 class mediator"/>
    <property type="evidence" value="ECO:0000266"/>
    <property type="project" value="RGD"/>
</dbReference>
<dbReference type="GO" id="GO:0008630">
    <property type="term" value="P:intrinsic apoptotic signaling pathway in response to DNA damage"/>
    <property type="evidence" value="ECO:0000318"/>
    <property type="project" value="GO_Central"/>
</dbReference>
<dbReference type="GO" id="GO:0008584">
    <property type="term" value="P:male gonad development"/>
    <property type="evidence" value="ECO:0000270"/>
    <property type="project" value="RGD"/>
</dbReference>
<dbReference type="GO" id="GO:0051902">
    <property type="term" value="P:negative regulation of mitochondrial depolarization"/>
    <property type="evidence" value="ECO:0000266"/>
    <property type="project" value="RGD"/>
</dbReference>
<dbReference type="GO" id="GO:1901029">
    <property type="term" value="P:negative regulation of mitochondrial outer membrane permeabilization involved in apoptotic signaling pathway"/>
    <property type="evidence" value="ECO:0000266"/>
    <property type="project" value="RGD"/>
</dbReference>
<dbReference type="GO" id="GO:0060546">
    <property type="term" value="P:negative regulation of necroptotic process"/>
    <property type="evidence" value="ECO:0000266"/>
    <property type="project" value="RGD"/>
</dbReference>
<dbReference type="GO" id="GO:0043524">
    <property type="term" value="P:negative regulation of neuron apoptotic process"/>
    <property type="evidence" value="ECO:0000266"/>
    <property type="project" value="RGD"/>
</dbReference>
<dbReference type="GO" id="GO:0051402">
    <property type="term" value="P:neuron apoptotic process"/>
    <property type="evidence" value="ECO:0000266"/>
    <property type="project" value="RGD"/>
</dbReference>
<dbReference type="GO" id="GO:0048709">
    <property type="term" value="P:oligodendrocyte differentiation"/>
    <property type="evidence" value="ECO:0000270"/>
    <property type="project" value="RGD"/>
</dbReference>
<dbReference type="GO" id="GO:0043065">
    <property type="term" value="P:positive regulation of apoptotic process"/>
    <property type="evidence" value="ECO:0000314"/>
    <property type="project" value="UniProtKB"/>
</dbReference>
<dbReference type="GO" id="GO:1902237">
    <property type="term" value="P:positive regulation of endoplasmic reticulum stress-induced intrinsic apoptotic signaling pathway"/>
    <property type="evidence" value="ECO:0000250"/>
    <property type="project" value="UniProtKB"/>
</dbReference>
<dbReference type="GO" id="GO:1900119">
    <property type="term" value="P:positive regulation of execution phase of apoptosis"/>
    <property type="evidence" value="ECO:0000250"/>
    <property type="project" value="UniProtKB"/>
</dbReference>
<dbReference type="GO" id="GO:2001244">
    <property type="term" value="P:positive regulation of intrinsic apoptotic signaling pathway"/>
    <property type="evidence" value="ECO:0000250"/>
    <property type="project" value="UniProtKB"/>
</dbReference>
<dbReference type="GO" id="GO:1901030">
    <property type="term" value="P:positive regulation of mitochondrial outer membrane permeabilization involved in apoptotic signaling pathway"/>
    <property type="evidence" value="ECO:0000250"/>
    <property type="project" value="UniProtKB"/>
</dbReference>
<dbReference type="GO" id="GO:1903899">
    <property type="term" value="P:positive regulation of PERK-mediated unfolded protein response"/>
    <property type="evidence" value="ECO:0000250"/>
    <property type="project" value="UniProtKB"/>
</dbReference>
<dbReference type="GO" id="GO:0051259">
    <property type="term" value="P:protein complex oligomerization"/>
    <property type="evidence" value="ECO:0000250"/>
    <property type="project" value="UniProtKB"/>
</dbReference>
<dbReference type="GO" id="GO:0010506">
    <property type="term" value="P:regulation of autophagy"/>
    <property type="evidence" value="ECO:0000266"/>
    <property type="project" value="RGD"/>
</dbReference>
<dbReference type="GO" id="GO:1901382">
    <property type="term" value="P:regulation of chorionic trophoblast cell proliferation"/>
    <property type="evidence" value="ECO:0000250"/>
    <property type="project" value="UniProtKB"/>
</dbReference>
<dbReference type="GO" id="GO:0051480">
    <property type="term" value="P:regulation of cytosolic calcium ion concentration"/>
    <property type="evidence" value="ECO:0000266"/>
    <property type="project" value="RGD"/>
</dbReference>
<dbReference type="GO" id="GO:1904708">
    <property type="term" value="P:regulation of granulosa cell apoptotic process"/>
    <property type="evidence" value="ECO:0000250"/>
    <property type="project" value="UniProtKB"/>
</dbReference>
<dbReference type="GO" id="GO:0001836">
    <property type="term" value="P:release of cytochrome c from mitochondria"/>
    <property type="evidence" value="ECO:0000266"/>
    <property type="project" value="RGD"/>
</dbReference>
<dbReference type="GO" id="GO:0072718">
    <property type="term" value="P:response to cisplatin"/>
    <property type="evidence" value="ECO:0000270"/>
    <property type="project" value="RGD"/>
</dbReference>
<dbReference type="CDD" id="cd06845">
    <property type="entry name" value="Bcl-2_like"/>
    <property type="match status" value="1"/>
</dbReference>
<dbReference type="FunFam" id="1.10.437.10:FF:000005">
    <property type="entry name" value="bcl-2-related ovarian killer protein"/>
    <property type="match status" value="1"/>
</dbReference>
<dbReference type="Gene3D" id="1.10.437.10">
    <property type="entry name" value="Blc2-like"/>
    <property type="match status" value="1"/>
</dbReference>
<dbReference type="InterPro" id="IPR036834">
    <property type="entry name" value="Bcl-2-like_sf"/>
</dbReference>
<dbReference type="InterPro" id="IPR046371">
    <property type="entry name" value="Bcl-2_BH1-3"/>
</dbReference>
<dbReference type="InterPro" id="IPR026298">
    <property type="entry name" value="Bcl-2_fam"/>
</dbReference>
<dbReference type="InterPro" id="IPR002475">
    <property type="entry name" value="Bcl2-like"/>
</dbReference>
<dbReference type="PANTHER" id="PTHR11256">
    <property type="entry name" value="BCL-2 RELATED"/>
    <property type="match status" value="1"/>
</dbReference>
<dbReference type="PANTHER" id="PTHR11256:SF48">
    <property type="entry name" value="BCL-2-RELATED OVARIAN KILLER PROTEIN"/>
    <property type="match status" value="1"/>
</dbReference>
<dbReference type="Pfam" id="PF00452">
    <property type="entry name" value="Bcl-2"/>
    <property type="match status" value="1"/>
</dbReference>
<dbReference type="PRINTS" id="PR01862">
    <property type="entry name" value="BCL2FAMILY"/>
</dbReference>
<dbReference type="SMART" id="SM00337">
    <property type="entry name" value="BCL"/>
    <property type="match status" value="1"/>
</dbReference>
<dbReference type="SUPFAM" id="SSF56854">
    <property type="entry name" value="Bcl-2 inhibitors of programmed cell death"/>
    <property type="match status" value="1"/>
</dbReference>
<dbReference type="PROSITE" id="PS50062">
    <property type="entry name" value="BCL2_FAMILY"/>
    <property type="match status" value="1"/>
</dbReference>
<feature type="chain" id="PRO_0000143088" description="Bcl-2-related ovarian killer protein">
    <location>
        <begin position="1"/>
        <end position="213"/>
    </location>
</feature>
<feature type="transmembrane region" description="Helical" evidence="3">
    <location>
        <begin position="190"/>
        <end position="210"/>
    </location>
</feature>
<feature type="region of interest" description="Interactions with ITPR1" evidence="1">
    <location>
        <begin position="15"/>
        <end position="45"/>
    </location>
</feature>
<feature type="region of interest" description="Nuclear export signal" evidence="2">
    <location>
        <begin position="71"/>
        <end position="79"/>
    </location>
</feature>
<feature type="short sequence motif" description="BH4">
    <location>
        <begin position="32"/>
        <end position="44"/>
    </location>
</feature>
<feature type="short sequence motif" description="BH3">
    <location>
        <begin position="67"/>
        <end position="83"/>
    </location>
</feature>
<feature type="short sequence motif" description="BH1">
    <location>
        <begin position="113"/>
        <end position="132"/>
    </location>
</feature>
<feature type="short sequence motif" description="BH2">
    <location>
        <begin position="165"/>
        <end position="179"/>
    </location>
</feature>
<feature type="modified residue" description="Phosphoserine" evidence="1">
    <location>
        <position position="7"/>
    </location>
</feature>
<feature type="cross-link" description="Glycyl lysine isopeptide (Lys-Gly) (interchain with G-Cter in ubiquitin)" evidence="1">
    <location>
        <position position="25"/>
    </location>
</feature>
<feature type="cross-link" description="Glycyl lysine isopeptide (Lys-Gly) (interchain with G-Cter in ubiquitin)" evidence="1">
    <location>
        <position position="32"/>
    </location>
</feature>
<feature type="cross-link" description="Glycyl lysine isopeptide (Lys-Gly) (interchain with G-Cter in ubiquitin)" evidence="1">
    <location>
        <position position="160"/>
    </location>
</feature>
<feature type="cross-link" description="Glycyl lysine isopeptide (Lys-Gly) (interchain with G-Cter in ubiquitin)" evidence="1">
    <location>
        <position position="177"/>
    </location>
</feature>
<feature type="splice variant" id="VSP_012447" description="In isoform 2." evidence="6">
    <location>
        <begin position="75"/>
        <end position="117"/>
    </location>
</feature>
<feature type="mutagenesis site" description="Retains proapoptotic activity. Does not heterodimerizes." evidence="5">
    <original>LLRL</original>
    <variation>GGGG</variation>
    <location>
        <begin position="71"/>
        <end position="74"/>
    </location>
</feature>
<feature type="mutagenesis site" description="Retains proapoptotic activity." evidence="5">
    <original>GDE</original>
    <variation>AAA</variation>
    <location>
        <begin position="75"/>
        <end position="77"/>
    </location>
</feature>
<feature type="mutagenesis site" description="Retains proapoptotic activity." evidence="5">
    <original>G</original>
    <variation>A</variation>
    <location>
        <position position="75"/>
    </location>
</feature>
<sequence length="213" mass="23456">MEVLRRSSVFAAEIMDAFDRSPTDKELVAQAKALGREYVHARLLRAGLSWSAPERASPAPGGRLAEVCTVLLRLGDELEQIRPSVYRNVARQLHIPLQSEPVVTDAFLAVAGHIFSAGITWGKVVSLYSVAAGLAVDCVRQAQPAMVHALVDCLGEFVRKTLATWLRRRGGWTDVLKCVVSTDPGFRSHWLVATLCSFGRFLKAAFFLLLPER</sequence>